<organism>
    <name type="scientific">Arabidopsis thaliana</name>
    <name type="common">Mouse-ear cress</name>
    <dbReference type="NCBI Taxonomy" id="3702"/>
    <lineage>
        <taxon>Eukaryota</taxon>
        <taxon>Viridiplantae</taxon>
        <taxon>Streptophyta</taxon>
        <taxon>Embryophyta</taxon>
        <taxon>Tracheophyta</taxon>
        <taxon>Spermatophyta</taxon>
        <taxon>Magnoliopsida</taxon>
        <taxon>eudicotyledons</taxon>
        <taxon>Gunneridae</taxon>
        <taxon>Pentapetalae</taxon>
        <taxon>rosids</taxon>
        <taxon>malvids</taxon>
        <taxon>Brassicales</taxon>
        <taxon>Brassicaceae</taxon>
        <taxon>Camelineae</taxon>
        <taxon>Arabidopsis</taxon>
    </lineage>
</organism>
<keyword id="KW-0007">Acetylation</keyword>
<keyword id="KW-0025">Alternative splicing</keyword>
<keyword id="KW-1003">Cell membrane</keyword>
<keyword id="KW-0472">Membrane</keyword>
<keyword id="KW-0597">Phosphoprotein</keyword>
<keyword id="KW-1185">Reference proteome</keyword>
<keyword id="KW-0677">Repeat</keyword>
<keyword id="KW-0812">Transmembrane</keyword>
<keyword id="KW-1133">Transmembrane helix</keyword>
<keyword id="KW-0813">Transport</keyword>
<accession>Q08733</accession>
<accession>Q8W4E5</accession>
<evidence type="ECO:0000250" key="1"/>
<evidence type="ECO:0000250" key="2">
    <source>
        <dbReference type="UniProtKB" id="P43286"/>
    </source>
</evidence>
<evidence type="ECO:0000255" key="3"/>
<evidence type="ECO:0000256" key="4">
    <source>
        <dbReference type="SAM" id="MobiDB-lite"/>
    </source>
</evidence>
<evidence type="ECO:0000269" key="5">
    <source>
    </source>
</evidence>
<evidence type="ECO:0000269" key="6">
    <source>
    </source>
</evidence>
<evidence type="ECO:0000269" key="7">
    <source>
    </source>
</evidence>
<evidence type="ECO:0000305" key="8"/>
<protein>
    <recommendedName>
        <fullName>Aquaporin PIP1-3</fullName>
        <shortName>AtPIP1;3</shortName>
    </recommendedName>
    <alternativeName>
        <fullName>Plasma membrane intrinsic protein 1c</fullName>
        <shortName>PIP1c</shortName>
    </alternativeName>
    <alternativeName>
        <fullName>Transmembrane protein B</fullName>
        <shortName>TMP-B</shortName>
    </alternativeName>
</protein>
<dbReference type="EMBL" id="X69294">
    <property type="protein sequence ID" value="CAA49155.1"/>
    <property type="molecule type" value="mRNA"/>
</dbReference>
<dbReference type="EMBL" id="X75882">
    <property type="protein sequence ID" value="CAA53476.1"/>
    <property type="molecule type" value="mRNA"/>
</dbReference>
<dbReference type="EMBL" id="AC061957">
    <property type="protein sequence ID" value="AAF81320.1"/>
    <property type="molecule type" value="Genomic_DNA"/>
</dbReference>
<dbReference type="EMBL" id="CP002684">
    <property type="protein sequence ID" value="AEE27312.1"/>
    <property type="molecule type" value="Genomic_DNA"/>
</dbReference>
<dbReference type="EMBL" id="AF348574">
    <property type="protein sequence ID" value="AAK15545.1"/>
    <property type="molecule type" value="mRNA"/>
</dbReference>
<dbReference type="EMBL" id="AY062610">
    <property type="protein sequence ID" value="AAL32688.1"/>
    <property type="molecule type" value="mRNA"/>
</dbReference>
<dbReference type="EMBL" id="BT002101">
    <property type="protein sequence ID" value="AAN72112.1"/>
    <property type="molecule type" value="mRNA"/>
</dbReference>
<dbReference type="PIR" id="A86147">
    <property type="entry name" value="A86147"/>
</dbReference>
<dbReference type="RefSeq" id="NP_171668.1">
    <molecule id="Q08733-1"/>
    <property type="nucleotide sequence ID" value="NM_100044.5"/>
</dbReference>
<dbReference type="SMR" id="Q08733"/>
<dbReference type="BioGRID" id="24471">
    <property type="interactions" value="66"/>
</dbReference>
<dbReference type="FunCoup" id="Q08733">
    <property type="interactions" value="138"/>
</dbReference>
<dbReference type="IntAct" id="Q08733">
    <property type="interactions" value="61"/>
</dbReference>
<dbReference type="STRING" id="3702.Q08733"/>
<dbReference type="iPTMnet" id="Q08733"/>
<dbReference type="MetOSite" id="Q08733"/>
<dbReference type="PaxDb" id="3702-AT1G01620.1"/>
<dbReference type="ProteomicsDB" id="234668">
    <molecule id="Q08733-1"/>
</dbReference>
<dbReference type="EnsemblPlants" id="AT1G01620.1">
    <molecule id="Q08733-1"/>
    <property type="protein sequence ID" value="AT1G01620.1"/>
    <property type="gene ID" value="AT1G01620"/>
</dbReference>
<dbReference type="GeneID" id="839235"/>
<dbReference type="Gramene" id="AT1G01620.1">
    <molecule id="Q08733-1"/>
    <property type="protein sequence ID" value="AT1G01620.1"/>
    <property type="gene ID" value="AT1G01620"/>
</dbReference>
<dbReference type="KEGG" id="ath:AT1G01620"/>
<dbReference type="Araport" id="AT1G01620"/>
<dbReference type="TAIR" id="AT1G01620">
    <property type="gene designation" value="PIP1C"/>
</dbReference>
<dbReference type="eggNOG" id="KOG0223">
    <property type="taxonomic scope" value="Eukaryota"/>
</dbReference>
<dbReference type="InParanoid" id="Q08733"/>
<dbReference type="OMA" id="APYLACQ"/>
<dbReference type="OrthoDB" id="3222at2759"/>
<dbReference type="PhylomeDB" id="Q08733"/>
<dbReference type="PRO" id="PR:Q08733"/>
<dbReference type="Proteomes" id="UP000006548">
    <property type="component" value="Chromosome 1"/>
</dbReference>
<dbReference type="ExpressionAtlas" id="Q08733">
    <property type="expression patterns" value="baseline and differential"/>
</dbReference>
<dbReference type="GO" id="GO:0005576">
    <property type="term" value="C:extracellular region"/>
    <property type="evidence" value="ECO:0007005"/>
    <property type="project" value="TAIR"/>
</dbReference>
<dbReference type="GO" id="GO:0005886">
    <property type="term" value="C:plasma membrane"/>
    <property type="evidence" value="ECO:0000314"/>
    <property type="project" value="TAIR"/>
</dbReference>
<dbReference type="GO" id="GO:0015250">
    <property type="term" value="F:water channel activity"/>
    <property type="evidence" value="ECO:0000314"/>
    <property type="project" value="TAIR"/>
</dbReference>
<dbReference type="GO" id="GO:0009414">
    <property type="term" value="P:response to water deprivation"/>
    <property type="evidence" value="ECO:0000270"/>
    <property type="project" value="TAIR"/>
</dbReference>
<dbReference type="GO" id="GO:0006833">
    <property type="term" value="P:water transport"/>
    <property type="evidence" value="ECO:0000314"/>
    <property type="project" value="TAIR"/>
</dbReference>
<dbReference type="CDD" id="cd00333">
    <property type="entry name" value="MIP"/>
    <property type="match status" value="1"/>
</dbReference>
<dbReference type="FunFam" id="1.20.1080.10:FF:000001">
    <property type="entry name" value="Probable aquaporin PIP1-2"/>
    <property type="match status" value="1"/>
</dbReference>
<dbReference type="Gene3D" id="1.20.1080.10">
    <property type="entry name" value="Glycerol uptake facilitator protein"/>
    <property type="match status" value="1"/>
</dbReference>
<dbReference type="InterPro" id="IPR023271">
    <property type="entry name" value="Aquaporin-like"/>
</dbReference>
<dbReference type="InterPro" id="IPR034294">
    <property type="entry name" value="Aquaporin_transptr"/>
</dbReference>
<dbReference type="InterPro" id="IPR000425">
    <property type="entry name" value="MIP"/>
</dbReference>
<dbReference type="InterPro" id="IPR022357">
    <property type="entry name" value="MIP_CS"/>
</dbReference>
<dbReference type="NCBIfam" id="TIGR00861">
    <property type="entry name" value="MIP"/>
    <property type="match status" value="1"/>
</dbReference>
<dbReference type="PANTHER" id="PTHR45687">
    <property type="entry name" value="AQUAPORIN OR AQUAGLYCEROPORIN RELATED"/>
    <property type="match status" value="1"/>
</dbReference>
<dbReference type="Pfam" id="PF00230">
    <property type="entry name" value="MIP"/>
    <property type="match status" value="1"/>
</dbReference>
<dbReference type="PRINTS" id="PR00783">
    <property type="entry name" value="MINTRINSICP"/>
</dbReference>
<dbReference type="SUPFAM" id="SSF81338">
    <property type="entry name" value="Aquaporin-like"/>
    <property type="match status" value="1"/>
</dbReference>
<dbReference type="PROSITE" id="PS00221">
    <property type="entry name" value="MIP"/>
    <property type="match status" value="1"/>
</dbReference>
<name>PIP13_ARATH</name>
<gene>
    <name type="primary">PIP1-3</name>
    <name type="synonym">PIP1C</name>
    <name type="synonym">TMPB</name>
    <name type="ordered locus">At1g01620</name>
    <name type="ORF">F22L4.16</name>
</gene>
<feature type="chain" id="PRO_0000064048" description="Aquaporin PIP1-3">
    <location>
        <begin position="1"/>
        <end position="286"/>
    </location>
</feature>
<feature type="topological domain" description="Cytoplasmic" evidence="3">
    <location>
        <begin position="1"/>
        <end position="54"/>
    </location>
</feature>
<feature type="transmembrane region" description="Helical; Name=1" evidence="3">
    <location>
        <begin position="55"/>
        <end position="75"/>
    </location>
</feature>
<feature type="topological domain" description="Extracellular" evidence="3">
    <location>
        <begin position="76"/>
        <end position="81"/>
    </location>
</feature>
<feature type="transmembrane region" description="Helical; Name=2" evidence="3">
    <location>
        <begin position="82"/>
        <end position="102"/>
    </location>
</feature>
<feature type="topological domain" description="Cytoplasmic" evidence="3">
    <location>
        <begin position="103"/>
        <end position="132"/>
    </location>
</feature>
<feature type="transmembrane region" description="Helical; Name=3" evidence="3">
    <location>
        <begin position="133"/>
        <end position="153"/>
    </location>
</feature>
<feature type="topological domain" description="Extracellular" evidence="3">
    <location>
        <begin position="154"/>
        <end position="174"/>
    </location>
</feature>
<feature type="transmembrane region" description="Helical; Name=4" evidence="3">
    <location>
        <begin position="175"/>
        <end position="195"/>
    </location>
</feature>
<feature type="topological domain" description="Cytoplasmic" evidence="3">
    <location>
        <begin position="196"/>
        <end position="208"/>
    </location>
</feature>
<feature type="transmembrane region" description="Helical; Name=5" evidence="3">
    <location>
        <begin position="209"/>
        <end position="229"/>
    </location>
</feature>
<feature type="topological domain" description="Extracellular" evidence="3">
    <location>
        <begin position="230"/>
        <end position="256"/>
    </location>
</feature>
<feature type="transmembrane region" description="Helical; Name=6" evidence="3">
    <location>
        <begin position="257"/>
        <end position="277"/>
    </location>
</feature>
<feature type="topological domain" description="Cytoplasmic" evidence="3">
    <location>
        <begin position="278"/>
        <end position="286"/>
    </location>
</feature>
<feature type="region of interest" description="Disordered" evidence="4">
    <location>
        <begin position="1"/>
        <end position="33"/>
    </location>
</feature>
<feature type="short sequence motif" description="NPA 1">
    <location>
        <begin position="114"/>
        <end position="116"/>
    </location>
</feature>
<feature type="short sequence motif" description="NPA 2">
    <location>
        <begin position="235"/>
        <end position="237"/>
    </location>
</feature>
<feature type="modified residue" description="N-acetylmethionine" evidence="6">
    <location>
        <position position="1"/>
    </location>
</feature>
<feature type="modified residue" description="Phosphoserine" evidence="2">
    <location>
        <position position="284"/>
    </location>
</feature>
<feature type="sequence conflict" description="In Ref. 2; CAA53476." evidence="8" ref="2">
    <original>L</original>
    <variation>F</variation>
    <location>
        <position position="141"/>
    </location>
</feature>
<feature type="sequence conflict" description="In Ref. 2; CAA53476." evidence="8" ref="2">
    <original>V</original>
    <variation>I</variation>
    <location>
        <position position="189"/>
    </location>
</feature>
<feature type="sequence conflict" description="In Ref. 2; CAA53476." evidence="8" ref="2">
    <original>T</original>
    <variation>S</variation>
    <location>
        <position position="226"/>
    </location>
</feature>
<feature type="sequence conflict" description="In Ref. 5; AAN72112." evidence="8" ref="5">
    <original>I</original>
    <variation>F</variation>
    <location>
        <position position="227"/>
    </location>
</feature>
<reference key="1">
    <citation type="journal article" date="1993" name="Plant Physiol.">
        <title>Nucleotide sequence of an Arabidopsis thaliana turgor-responsive TMP-B cDNA clone encoding transmembrane protein with a major intrinsic protein motif.</title>
        <authorList>
            <person name="Shagan T."/>
            <person name="Meraro D."/>
            <person name="Bar-Zvi D."/>
        </authorList>
    </citation>
    <scope>NUCLEOTIDE SEQUENCE [MRNA]</scope>
    <source>
        <strain>cv. Columbia</strain>
        <tissue>Etiolated seedling</tissue>
    </source>
</reference>
<reference key="2">
    <citation type="journal article" date="1994" name="Plant J.">
        <title>Water channels in the plant plasma membrane cloned by immunoselection from a mammalian expression system.</title>
        <authorList>
            <person name="Kammerloher W."/>
            <person name="Fischer U."/>
            <person name="Piechottka G.P."/>
            <person name="Schaeffner A.R."/>
        </authorList>
    </citation>
    <scope>NUCLEOTIDE SEQUENCE [MRNA]</scope>
    <scope>FUNCTION</scope>
    <scope>SUBCELLULAR LOCATION</scope>
    <scope>TISSUE SPECIFICITY</scope>
    <source>
        <strain>cv. Landsberg erecta</strain>
        <tissue>Root</tissue>
    </source>
</reference>
<reference key="3">
    <citation type="journal article" date="2000" name="Nature">
        <title>Sequence and analysis of chromosome 1 of the plant Arabidopsis thaliana.</title>
        <authorList>
            <person name="Theologis A."/>
            <person name="Ecker J.R."/>
            <person name="Palm C.J."/>
            <person name="Federspiel N.A."/>
            <person name="Kaul S."/>
            <person name="White O."/>
            <person name="Alonso J."/>
            <person name="Altafi H."/>
            <person name="Araujo R."/>
            <person name="Bowman C.L."/>
            <person name="Brooks S.Y."/>
            <person name="Buehler E."/>
            <person name="Chan A."/>
            <person name="Chao Q."/>
            <person name="Chen H."/>
            <person name="Cheuk R.F."/>
            <person name="Chin C.W."/>
            <person name="Chung M.K."/>
            <person name="Conn L."/>
            <person name="Conway A.B."/>
            <person name="Conway A.R."/>
            <person name="Creasy T.H."/>
            <person name="Dewar K."/>
            <person name="Dunn P."/>
            <person name="Etgu P."/>
            <person name="Feldblyum T.V."/>
            <person name="Feng J.-D."/>
            <person name="Fong B."/>
            <person name="Fujii C.Y."/>
            <person name="Gill J.E."/>
            <person name="Goldsmith A.D."/>
            <person name="Haas B."/>
            <person name="Hansen N.F."/>
            <person name="Hughes B."/>
            <person name="Huizar L."/>
            <person name="Hunter J.L."/>
            <person name="Jenkins J."/>
            <person name="Johnson-Hopson C."/>
            <person name="Khan S."/>
            <person name="Khaykin E."/>
            <person name="Kim C.J."/>
            <person name="Koo H.L."/>
            <person name="Kremenetskaia I."/>
            <person name="Kurtz D.B."/>
            <person name="Kwan A."/>
            <person name="Lam B."/>
            <person name="Langin-Hooper S."/>
            <person name="Lee A."/>
            <person name="Lee J.M."/>
            <person name="Lenz C.A."/>
            <person name="Li J.H."/>
            <person name="Li Y.-P."/>
            <person name="Lin X."/>
            <person name="Liu S.X."/>
            <person name="Liu Z.A."/>
            <person name="Luros J.S."/>
            <person name="Maiti R."/>
            <person name="Marziali A."/>
            <person name="Militscher J."/>
            <person name="Miranda M."/>
            <person name="Nguyen M."/>
            <person name="Nierman W.C."/>
            <person name="Osborne B.I."/>
            <person name="Pai G."/>
            <person name="Peterson J."/>
            <person name="Pham P.K."/>
            <person name="Rizzo M."/>
            <person name="Rooney T."/>
            <person name="Rowley D."/>
            <person name="Sakano H."/>
            <person name="Salzberg S.L."/>
            <person name="Schwartz J.R."/>
            <person name="Shinn P."/>
            <person name="Southwick A.M."/>
            <person name="Sun H."/>
            <person name="Tallon L.J."/>
            <person name="Tambunga G."/>
            <person name="Toriumi M.J."/>
            <person name="Town C.D."/>
            <person name="Utterback T."/>
            <person name="Van Aken S."/>
            <person name="Vaysberg M."/>
            <person name="Vysotskaia V.S."/>
            <person name="Walker M."/>
            <person name="Wu D."/>
            <person name="Yu G."/>
            <person name="Fraser C.M."/>
            <person name="Venter J.C."/>
            <person name="Davis R.W."/>
        </authorList>
    </citation>
    <scope>NUCLEOTIDE SEQUENCE [LARGE SCALE GENOMIC DNA]</scope>
    <source>
        <strain>cv. Columbia</strain>
    </source>
</reference>
<reference key="4">
    <citation type="journal article" date="2017" name="Plant J.">
        <title>Araport11: a complete reannotation of the Arabidopsis thaliana reference genome.</title>
        <authorList>
            <person name="Cheng C.Y."/>
            <person name="Krishnakumar V."/>
            <person name="Chan A.P."/>
            <person name="Thibaud-Nissen F."/>
            <person name="Schobel S."/>
            <person name="Town C.D."/>
        </authorList>
    </citation>
    <scope>GENOME REANNOTATION</scope>
    <source>
        <strain>cv. Columbia</strain>
    </source>
</reference>
<reference key="5">
    <citation type="journal article" date="2003" name="Science">
        <title>Empirical analysis of transcriptional activity in the Arabidopsis genome.</title>
        <authorList>
            <person name="Yamada K."/>
            <person name="Lim J."/>
            <person name="Dale J.M."/>
            <person name="Chen H."/>
            <person name="Shinn P."/>
            <person name="Palm C.J."/>
            <person name="Southwick A.M."/>
            <person name="Wu H.C."/>
            <person name="Kim C.J."/>
            <person name="Nguyen M."/>
            <person name="Pham P.K."/>
            <person name="Cheuk R.F."/>
            <person name="Karlin-Newmann G."/>
            <person name="Liu S.X."/>
            <person name="Lam B."/>
            <person name="Sakano H."/>
            <person name="Wu T."/>
            <person name="Yu G."/>
            <person name="Miranda M."/>
            <person name="Quach H.L."/>
            <person name="Tripp M."/>
            <person name="Chang C.H."/>
            <person name="Lee J.M."/>
            <person name="Toriumi M.J."/>
            <person name="Chan M.M."/>
            <person name="Tang C.C."/>
            <person name="Onodera C.S."/>
            <person name="Deng J.M."/>
            <person name="Akiyama K."/>
            <person name="Ansari Y."/>
            <person name="Arakawa T."/>
            <person name="Banh J."/>
            <person name="Banno F."/>
            <person name="Bowser L."/>
            <person name="Brooks S.Y."/>
            <person name="Carninci P."/>
            <person name="Chao Q."/>
            <person name="Choy N."/>
            <person name="Enju A."/>
            <person name="Goldsmith A.D."/>
            <person name="Gurjal M."/>
            <person name="Hansen N.F."/>
            <person name="Hayashizaki Y."/>
            <person name="Johnson-Hopson C."/>
            <person name="Hsuan V.W."/>
            <person name="Iida K."/>
            <person name="Karnes M."/>
            <person name="Khan S."/>
            <person name="Koesema E."/>
            <person name="Ishida J."/>
            <person name="Jiang P.X."/>
            <person name="Jones T."/>
            <person name="Kawai J."/>
            <person name="Kamiya A."/>
            <person name="Meyers C."/>
            <person name="Nakajima M."/>
            <person name="Narusaka M."/>
            <person name="Seki M."/>
            <person name="Sakurai T."/>
            <person name="Satou M."/>
            <person name="Tamse R."/>
            <person name="Vaysberg M."/>
            <person name="Wallender E.K."/>
            <person name="Wong C."/>
            <person name="Yamamura Y."/>
            <person name="Yuan S."/>
            <person name="Shinozaki K."/>
            <person name="Davis R.W."/>
            <person name="Theologis A."/>
            <person name="Ecker J.R."/>
        </authorList>
    </citation>
    <scope>NUCLEOTIDE SEQUENCE [LARGE SCALE MRNA]</scope>
    <source>
        <strain>cv. Columbia</strain>
    </source>
</reference>
<reference key="6">
    <citation type="journal article" date="2002" name="Genome Biol.">
        <title>From genome to function: the Arabidopsis aquaporins.</title>
        <authorList>
            <person name="Quigley F."/>
            <person name="Rosenberg J.M."/>
            <person name="Shachar-Hill Y."/>
            <person name="Bohnert H.J."/>
        </authorList>
    </citation>
    <scope>NOMENCLATURE</scope>
    <scope>TISSUE SPECIFICITY</scope>
</reference>
<reference key="7">
    <citation type="journal article" date="2006" name="Biochem. J.">
        <title>Methylation of aquaporins in plant plasma membrane.</title>
        <authorList>
            <person name="Santoni V."/>
            <person name="Verdoucq L."/>
            <person name="Sommerer N."/>
            <person name="Vinh J."/>
            <person name="Pflieger D."/>
            <person name="Maurel C."/>
        </authorList>
    </citation>
    <scope>ACETYLATION AT MET-1</scope>
    <scope>IDENTIFICATION BY MASS SPECTROMETRY</scope>
</reference>
<comment type="function">
    <text evidence="7">Water channel required to facilitate the transport of water across cell membrane. Its function is impaired by Hg(2+).</text>
</comment>
<comment type="interaction">
    <interactant intactId="EBI-4431134">
        <id>Q08733</id>
    </interactant>
    <interactant intactId="EBI-4431139">
        <id>P30302</id>
        <label>PIP2-3</label>
    </interactant>
    <organismsDiffer>false</organismsDiffer>
    <experiments>2</experiments>
</comment>
<comment type="interaction">
    <interactant intactId="EBI-4431134">
        <id>Q08733</id>
    </interactant>
    <interactant intactId="EBI-4425112">
        <id>Q9SV31</id>
        <label>PIP2-5</label>
    </interactant>
    <organismsDiffer>false</organismsDiffer>
    <experiments>5</experiments>
</comment>
<comment type="subcellular location">
    <subcellularLocation>
        <location evidence="7">Cell membrane</location>
        <topology evidence="7">Multi-pass membrane protein</topology>
    </subcellularLocation>
</comment>
<comment type="alternative products">
    <event type="alternative splicing"/>
    <isoform>
        <id>Q08733-1</id>
        <name>1</name>
        <sequence type="displayed"/>
    </isoform>
    <text>A number of isoforms are produced. According to EST sequences.</text>
</comment>
<comment type="tissue specificity">
    <text evidence="5 7">Expressed in roots, above ground, ripening fruit, flower buds, green siliques and senescing leaves.</text>
</comment>
<comment type="domain">
    <text evidence="1">The Asn-Pro-Ala (NPA) motifs may contribute to the formation of two hemipores that could generate a narrow channel.</text>
</comment>
<comment type="similarity">
    <text evidence="8">Belongs to the MIP/aquaporin (TC 1.A.8) family. PIP (TC 1.A.8.11) subfamily.</text>
</comment>
<sequence>MEGKEEDVRVGANKFPERQPIGTSAQTDKDYKEPPPAPFFEPGELSSWSFYRAGIAEFIATFLFLYITVLTVMGVKRAPNMCASVGIQGIAWAFGGMIFALVYCTAGISGGHINPAVTFGLFLARKLSLTRAVFYIVMQCLGAICGAGVVKGFQPNPYQTLGGGANTVAHGYTKGSGLGAEIIGTFVLVYTVFSATDAKRSARDSHVPILAPLPIGFAVFLVHLATIPITGTGINPARSLGAAIIYNKDHAWDDHWIFWVGPFIGAALAALYHQLVIRAIPFKSRS</sequence>
<proteinExistence type="evidence at protein level"/>